<reference evidence="10" key="1">
    <citation type="journal article" date="2000" name="Science">
        <title>The genome sequence of Drosophila melanogaster.</title>
        <authorList>
            <person name="Adams M.D."/>
            <person name="Celniker S.E."/>
            <person name="Holt R.A."/>
            <person name="Evans C.A."/>
            <person name="Gocayne J.D."/>
            <person name="Amanatides P.G."/>
            <person name="Scherer S.E."/>
            <person name="Li P.W."/>
            <person name="Hoskins R.A."/>
            <person name="Galle R.F."/>
            <person name="George R.A."/>
            <person name="Lewis S.E."/>
            <person name="Richards S."/>
            <person name="Ashburner M."/>
            <person name="Henderson S.N."/>
            <person name="Sutton G.G."/>
            <person name="Wortman J.R."/>
            <person name="Yandell M.D."/>
            <person name="Zhang Q."/>
            <person name="Chen L.X."/>
            <person name="Brandon R.C."/>
            <person name="Rogers Y.-H.C."/>
            <person name="Blazej R.G."/>
            <person name="Champe M."/>
            <person name="Pfeiffer B.D."/>
            <person name="Wan K.H."/>
            <person name="Doyle C."/>
            <person name="Baxter E.G."/>
            <person name="Helt G."/>
            <person name="Nelson C.R."/>
            <person name="Miklos G.L.G."/>
            <person name="Abril J.F."/>
            <person name="Agbayani A."/>
            <person name="An H.-J."/>
            <person name="Andrews-Pfannkoch C."/>
            <person name="Baldwin D."/>
            <person name="Ballew R.M."/>
            <person name="Basu A."/>
            <person name="Baxendale J."/>
            <person name="Bayraktaroglu L."/>
            <person name="Beasley E.M."/>
            <person name="Beeson K.Y."/>
            <person name="Benos P.V."/>
            <person name="Berman B.P."/>
            <person name="Bhandari D."/>
            <person name="Bolshakov S."/>
            <person name="Borkova D."/>
            <person name="Botchan M.R."/>
            <person name="Bouck J."/>
            <person name="Brokstein P."/>
            <person name="Brottier P."/>
            <person name="Burtis K.C."/>
            <person name="Busam D.A."/>
            <person name="Butler H."/>
            <person name="Cadieu E."/>
            <person name="Center A."/>
            <person name="Chandra I."/>
            <person name="Cherry J.M."/>
            <person name="Cawley S."/>
            <person name="Dahlke C."/>
            <person name="Davenport L.B."/>
            <person name="Davies P."/>
            <person name="de Pablos B."/>
            <person name="Delcher A."/>
            <person name="Deng Z."/>
            <person name="Mays A.D."/>
            <person name="Dew I."/>
            <person name="Dietz S.M."/>
            <person name="Dodson K."/>
            <person name="Doup L.E."/>
            <person name="Downes M."/>
            <person name="Dugan-Rocha S."/>
            <person name="Dunkov B.C."/>
            <person name="Dunn P."/>
            <person name="Durbin K.J."/>
            <person name="Evangelista C.C."/>
            <person name="Ferraz C."/>
            <person name="Ferriera S."/>
            <person name="Fleischmann W."/>
            <person name="Fosler C."/>
            <person name="Gabrielian A.E."/>
            <person name="Garg N.S."/>
            <person name="Gelbart W.M."/>
            <person name="Glasser K."/>
            <person name="Glodek A."/>
            <person name="Gong F."/>
            <person name="Gorrell J.H."/>
            <person name="Gu Z."/>
            <person name="Guan P."/>
            <person name="Harris M."/>
            <person name="Harris N.L."/>
            <person name="Harvey D.A."/>
            <person name="Heiman T.J."/>
            <person name="Hernandez J.R."/>
            <person name="Houck J."/>
            <person name="Hostin D."/>
            <person name="Houston K.A."/>
            <person name="Howland T.J."/>
            <person name="Wei M.-H."/>
            <person name="Ibegwam C."/>
            <person name="Jalali M."/>
            <person name="Kalush F."/>
            <person name="Karpen G.H."/>
            <person name="Ke Z."/>
            <person name="Kennison J.A."/>
            <person name="Ketchum K.A."/>
            <person name="Kimmel B.E."/>
            <person name="Kodira C.D."/>
            <person name="Kraft C.L."/>
            <person name="Kravitz S."/>
            <person name="Kulp D."/>
            <person name="Lai Z."/>
            <person name="Lasko P."/>
            <person name="Lei Y."/>
            <person name="Levitsky A.A."/>
            <person name="Li J.H."/>
            <person name="Li Z."/>
            <person name="Liang Y."/>
            <person name="Lin X."/>
            <person name="Liu X."/>
            <person name="Mattei B."/>
            <person name="McIntosh T.C."/>
            <person name="McLeod M.P."/>
            <person name="McPherson D."/>
            <person name="Merkulov G."/>
            <person name="Milshina N.V."/>
            <person name="Mobarry C."/>
            <person name="Morris J."/>
            <person name="Moshrefi A."/>
            <person name="Mount S.M."/>
            <person name="Moy M."/>
            <person name="Murphy B."/>
            <person name="Murphy L."/>
            <person name="Muzny D.M."/>
            <person name="Nelson D.L."/>
            <person name="Nelson D.R."/>
            <person name="Nelson K.A."/>
            <person name="Nixon K."/>
            <person name="Nusskern D.R."/>
            <person name="Pacleb J.M."/>
            <person name="Palazzolo M."/>
            <person name="Pittman G.S."/>
            <person name="Pan S."/>
            <person name="Pollard J."/>
            <person name="Puri V."/>
            <person name="Reese M.G."/>
            <person name="Reinert K."/>
            <person name="Remington K."/>
            <person name="Saunders R.D.C."/>
            <person name="Scheeler F."/>
            <person name="Shen H."/>
            <person name="Shue B.C."/>
            <person name="Siden-Kiamos I."/>
            <person name="Simpson M."/>
            <person name="Skupski M.P."/>
            <person name="Smith T.J."/>
            <person name="Spier E."/>
            <person name="Spradling A.C."/>
            <person name="Stapleton M."/>
            <person name="Strong R."/>
            <person name="Sun E."/>
            <person name="Svirskas R."/>
            <person name="Tector C."/>
            <person name="Turner R."/>
            <person name="Venter E."/>
            <person name="Wang A.H."/>
            <person name="Wang X."/>
            <person name="Wang Z.-Y."/>
            <person name="Wassarman D.A."/>
            <person name="Weinstock G.M."/>
            <person name="Weissenbach J."/>
            <person name="Williams S.M."/>
            <person name="Woodage T."/>
            <person name="Worley K.C."/>
            <person name="Wu D."/>
            <person name="Yang S."/>
            <person name="Yao Q.A."/>
            <person name="Ye J."/>
            <person name="Yeh R.-F."/>
            <person name="Zaveri J.S."/>
            <person name="Zhan M."/>
            <person name="Zhang G."/>
            <person name="Zhao Q."/>
            <person name="Zheng L."/>
            <person name="Zheng X.H."/>
            <person name="Zhong F.N."/>
            <person name="Zhong W."/>
            <person name="Zhou X."/>
            <person name="Zhu S.C."/>
            <person name="Zhu X."/>
            <person name="Smith H.O."/>
            <person name="Gibbs R.A."/>
            <person name="Myers E.W."/>
            <person name="Rubin G.M."/>
            <person name="Venter J.C."/>
        </authorList>
    </citation>
    <scope>NUCLEOTIDE SEQUENCE [LARGE SCALE GENOMIC DNA]</scope>
    <source>
        <strain evidence="3">Berkeley</strain>
    </source>
</reference>
<reference evidence="9 10" key="2">
    <citation type="journal article" date="2002" name="Genome Biol.">
        <title>Annotation of the Drosophila melanogaster euchromatic genome: a systematic review.</title>
        <authorList>
            <person name="Misra S."/>
            <person name="Crosby M.A."/>
            <person name="Mungall C.J."/>
            <person name="Matthews B.B."/>
            <person name="Campbell K.S."/>
            <person name="Hradecky P."/>
            <person name="Huang Y."/>
            <person name="Kaminker J.S."/>
            <person name="Millburn G.H."/>
            <person name="Prochnik S.E."/>
            <person name="Smith C.D."/>
            <person name="Tupy J.L."/>
            <person name="Whitfield E.J."/>
            <person name="Bayraktaroglu L."/>
            <person name="Berman B.P."/>
            <person name="Bettencourt B.R."/>
            <person name="Celniker S.E."/>
            <person name="de Grey A.D.N.J."/>
            <person name="Drysdale R.A."/>
            <person name="Harris N.L."/>
            <person name="Richter J."/>
            <person name="Russo S."/>
            <person name="Schroeder A.J."/>
            <person name="Shu S.Q."/>
            <person name="Stapleton M."/>
            <person name="Yamada C."/>
            <person name="Ashburner M."/>
            <person name="Gelbart W.M."/>
            <person name="Rubin G.M."/>
            <person name="Lewis S.E."/>
        </authorList>
    </citation>
    <scope>GENOME REANNOTATION</scope>
    <source>
        <strain>Berkeley</strain>
    </source>
</reference>
<reference evidence="11" key="3">
    <citation type="journal article" date="2002" name="Genome Biol.">
        <title>A Drosophila full-length cDNA resource.</title>
        <authorList>
            <person name="Stapleton M."/>
            <person name="Carlson J.W."/>
            <person name="Brokstein P."/>
            <person name="Yu C."/>
            <person name="Champe M."/>
            <person name="George R.A."/>
            <person name="Guarin H."/>
            <person name="Kronmiller B."/>
            <person name="Pacleb J.M."/>
            <person name="Park S."/>
            <person name="Wan K.H."/>
            <person name="Rubin G.M."/>
            <person name="Celniker S.E."/>
        </authorList>
    </citation>
    <scope>NUCLEOTIDE SEQUENCE [LARGE SCALE MRNA]</scope>
    <source>
        <strain evidence="11">Berkeley</strain>
        <tissue evidence="4">Embryo</tissue>
    </source>
</reference>
<reference evidence="9" key="4">
    <citation type="journal article" date="1998" name="Trends Cell Biol.">
        <title>Not just pretty eyes: Drosophila eye-colour mutations and lysosomal delivery.</title>
        <authorList>
            <person name="Lloyd V.K."/>
            <person name="Ramaswami M."/>
            <person name="Kramer H."/>
        </authorList>
    </citation>
    <scope>FUNCTION</scope>
    <scope>TISSUE SPECIFICITY</scope>
</reference>
<reference evidence="9" key="5">
    <citation type="journal article" date="2007" name="Genome">
        <title>The pink gene encodes the Drosophila orthologue of the human Hermansky-Pudlak syndrome 5 (HPS5) gene.</title>
        <authorList>
            <person name="Syrzycka M."/>
            <person name="McEachern L.A."/>
            <person name="Kinneard J."/>
            <person name="Prabhu K."/>
            <person name="Fitzpatrick K."/>
            <person name="Schulze S."/>
            <person name="Rawls J.M."/>
            <person name="Lloyd V.K."/>
            <person name="Sinclair D.A."/>
            <person name="Honda B.M."/>
        </authorList>
    </citation>
    <scope>IDENTIFICATION</scope>
</reference>
<reference evidence="9" key="6">
    <citation type="journal article" date="2007" name="Traffic">
        <title>The Drosophila pigmentation gene pink (p) encodes a homologue of human Hermansky-Pudlak syndrome 5 (HPS5).</title>
        <authorList>
            <person name="Falcon-Perez J.M."/>
            <person name="Romero-Calderon R."/>
            <person name="Brooks E.S."/>
            <person name="Krantz D.E."/>
            <person name="Dell'Angelica E.C."/>
        </authorList>
    </citation>
    <scope>DEVELOPMENTAL STAGE</scope>
    <scope>DISRUPTION PHENOTYPE</scope>
</reference>
<proteinExistence type="evidence at transcript level"/>
<feature type="chain" id="PRO_0000302764" description="BLOC-2 complex member HPS5 homolog">
    <location>
        <begin position="1"/>
        <end position="826"/>
    </location>
</feature>
<feature type="repeat" description="WD 1" evidence="1">
    <location>
        <begin position="22"/>
        <end position="61"/>
    </location>
</feature>
<feature type="repeat" description="WD 2" evidence="1">
    <location>
        <begin position="63"/>
        <end position="102"/>
    </location>
</feature>
<feature type="repeat" description="WD 3" evidence="1">
    <location>
        <begin position="110"/>
        <end position="149"/>
    </location>
</feature>
<feature type="region of interest" description="Disordered" evidence="2">
    <location>
        <begin position="422"/>
        <end position="447"/>
    </location>
</feature>
<feature type="compositionally biased region" description="Polar residues" evidence="2">
    <location>
        <begin position="422"/>
        <end position="446"/>
    </location>
</feature>
<feature type="sequence conflict" description="In Ref. 3; AAL90363." evidence="9" ref="3">
    <original>T</original>
    <variation>A</variation>
    <location>
        <position position="181"/>
    </location>
</feature>
<feature type="sequence conflict" description="In Ref. 3; AAL90363." evidence="9" ref="3">
    <original>L</original>
    <variation>Q</variation>
    <location>
        <position position="346"/>
    </location>
</feature>
<feature type="sequence conflict" description="In Ref. 3; AAL90363." evidence="9" ref="3">
    <original>K</original>
    <variation>R</variation>
    <location>
        <position position="566"/>
    </location>
</feature>
<organism>
    <name type="scientific">Drosophila melanogaster</name>
    <name type="common">Fruit fly</name>
    <dbReference type="NCBI Taxonomy" id="7227"/>
    <lineage>
        <taxon>Eukaryota</taxon>
        <taxon>Metazoa</taxon>
        <taxon>Ecdysozoa</taxon>
        <taxon>Arthropoda</taxon>
        <taxon>Hexapoda</taxon>
        <taxon>Insecta</taxon>
        <taxon>Pterygota</taxon>
        <taxon>Neoptera</taxon>
        <taxon>Endopterygota</taxon>
        <taxon>Diptera</taxon>
        <taxon>Brachycera</taxon>
        <taxon>Muscomorpha</taxon>
        <taxon>Ephydroidea</taxon>
        <taxon>Drosophilidae</taxon>
        <taxon>Drosophila</taxon>
        <taxon>Sophophora</taxon>
    </lineage>
</organism>
<keyword id="KW-0608">Pigment</keyword>
<keyword id="KW-1185">Reference proteome</keyword>
<keyword id="KW-0677">Repeat</keyword>
<keyword id="KW-0716">Sensory transduction</keyword>
<keyword id="KW-0844">Vision</keyword>
<keyword id="KW-0853">WD repeat</keyword>
<dbReference type="EMBL" id="AE014297">
    <property type="protein sequence ID" value="AAF54263.1"/>
    <property type="molecule type" value="Genomic_DNA"/>
</dbReference>
<dbReference type="EMBL" id="AY089625">
    <property type="protein sequence ID" value="AAL90363.1"/>
    <property type="molecule type" value="mRNA"/>
</dbReference>
<dbReference type="RefSeq" id="NP_001303455.1">
    <property type="nucleotide sequence ID" value="NM_001316526.1"/>
</dbReference>
<dbReference type="RefSeq" id="NP_001303456.1">
    <property type="nucleotide sequence ID" value="NM_001316527.1"/>
</dbReference>
<dbReference type="RefSeq" id="NP_649810.1">
    <property type="nucleotide sequence ID" value="NM_141553.3"/>
</dbReference>
<dbReference type="BioGRID" id="66200">
    <property type="interactions" value="7"/>
</dbReference>
<dbReference type="ComplexPortal" id="CPX-2755">
    <property type="entry name" value="BLOC-2 complex"/>
</dbReference>
<dbReference type="FunCoup" id="Q9VHN9">
    <property type="interactions" value="5"/>
</dbReference>
<dbReference type="IntAct" id="Q9VHN9">
    <property type="interactions" value="1"/>
</dbReference>
<dbReference type="STRING" id="7227.FBpp0312608"/>
<dbReference type="PaxDb" id="7227-FBpp0081373"/>
<dbReference type="EnsemblMetazoa" id="FBtr0081887">
    <property type="protein sequence ID" value="FBpp0081373"/>
    <property type="gene ID" value="FBgn0086679"/>
</dbReference>
<dbReference type="EnsemblMetazoa" id="FBtr0347576">
    <property type="protein sequence ID" value="FBpp0312607"/>
    <property type="gene ID" value="FBgn0086679"/>
</dbReference>
<dbReference type="EnsemblMetazoa" id="FBtr0347577">
    <property type="protein sequence ID" value="FBpp0312608"/>
    <property type="gene ID" value="FBgn0086679"/>
</dbReference>
<dbReference type="GeneID" id="41025"/>
<dbReference type="KEGG" id="dme:Dmel_CG9770"/>
<dbReference type="AGR" id="FB:FBgn0086679"/>
<dbReference type="CTD" id="41025"/>
<dbReference type="FlyBase" id="FBgn0086679">
    <property type="gene designation" value="p"/>
</dbReference>
<dbReference type="VEuPathDB" id="VectorBase:FBgn0086679"/>
<dbReference type="eggNOG" id="KOG3621">
    <property type="taxonomic scope" value="Eukaryota"/>
</dbReference>
<dbReference type="HOGENOM" id="CLU_302332_0_0_1"/>
<dbReference type="InParanoid" id="Q9VHN9"/>
<dbReference type="OMA" id="WARCFEQ"/>
<dbReference type="OrthoDB" id="19493at2759"/>
<dbReference type="PhylomeDB" id="Q9VHN9"/>
<dbReference type="BioGRID-ORCS" id="41025">
    <property type="hits" value="0 hits in 1 CRISPR screen"/>
</dbReference>
<dbReference type="ChiTaRS" id="p">
    <property type="organism name" value="fly"/>
</dbReference>
<dbReference type="GenomeRNAi" id="41025"/>
<dbReference type="PRO" id="PR:Q9VHN9"/>
<dbReference type="Proteomes" id="UP000000803">
    <property type="component" value="Chromosome 3R"/>
</dbReference>
<dbReference type="Bgee" id="FBgn0086679">
    <property type="expression patterns" value="Expressed in T neuron T4a (Drosophila) in embryonic/larval optic lobe (Drosophila) and 112 other cell types or tissues"/>
</dbReference>
<dbReference type="ExpressionAtlas" id="Q9VHN9">
    <property type="expression patterns" value="baseline and differential"/>
</dbReference>
<dbReference type="GO" id="GO:0031084">
    <property type="term" value="C:BLOC-2 complex"/>
    <property type="evidence" value="ECO:0000250"/>
    <property type="project" value="FlyBase"/>
</dbReference>
<dbReference type="GO" id="GO:0005737">
    <property type="term" value="C:cytoplasm"/>
    <property type="evidence" value="ECO:0000314"/>
    <property type="project" value="FlyBase"/>
</dbReference>
<dbReference type="GO" id="GO:0031409">
    <property type="term" value="F:pigment binding"/>
    <property type="evidence" value="ECO:0007669"/>
    <property type="project" value="UniProtKB-KW"/>
</dbReference>
<dbReference type="GO" id="GO:0048072">
    <property type="term" value="P:compound eye pigmentation"/>
    <property type="evidence" value="ECO:0000315"/>
    <property type="project" value="FlyBase"/>
</dbReference>
<dbReference type="GO" id="GO:0048066">
    <property type="term" value="P:developmental pigmentation"/>
    <property type="evidence" value="ECO:0000318"/>
    <property type="project" value="GO_Central"/>
</dbReference>
<dbReference type="GO" id="GO:0006726">
    <property type="term" value="P:eye pigment biosynthetic process"/>
    <property type="evidence" value="ECO:0000315"/>
    <property type="project" value="UniProtKB"/>
</dbReference>
<dbReference type="GO" id="GO:0006727">
    <property type="term" value="P:ommochrome biosynthetic process"/>
    <property type="evidence" value="ECO:0000315"/>
    <property type="project" value="FlyBase"/>
</dbReference>
<dbReference type="GO" id="GO:0006622">
    <property type="term" value="P:protein targeting to lysosome"/>
    <property type="evidence" value="ECO:0000315"/>
    <property type="project" value="UniProtKB"/>
</dbReference>
<dbReference type="GO" id="GO:0007601">
    <property type="term" value="P:visual perception"/>
    <property type="evidence" value="ECO:0007669"/>
    <property type="project" value="UniProtKB-KW"/>
</dbReference>
<dbReference type="FunFam" id="2.130.10.10:FF:000968">
    <property type="entry name" value="Hermansky-Pudlak syndrome 5 protein homolog"/>
    <property type="match status" value="1"/>
</dbReference>
<dbReference type="Gene3D" id="2.130.10.10">
    <property type="entry name" value="YVTN repeat-like/Quinoprotein amine dehydrogenase"/>
    <property type="match status" value="1"/>
</dbReference>
<dbReference type="InterPro" id="IPR056499">
    <property type="entry name" value="Beta-prop_HPS5-like"/>
</dbReference>
<dbReference type="InterPro" id="IPR035431">
    <property type="entry name" value="HPS5"/>
</dbReference>
<dbReference type="InterPro" id="IPR056446">
    <property type="entry name" value="TPR_HPS5_insects"/>
</dbReference>
<dbReference type="InterPro" id="IPR015943">
    <property type="entry name" value="WD40/YVTN_repeat-like_dom_sf"/>
</dbReference>
<dbReference type="PANTHER" id="PTHR23287:SF18">
    <property type="entry name" value="BLOC-2 COMPLEX MEMBER HPS5"/>
    <property type="match status" value="1"/>
</dbReference>
<dbReference type="PANTHER" id="PTHR23287">
    <property type="entry name" value="RUBY-EYE2-LIKE PROTEIN"/>
    <property type="match status" value="1"/>
</dbReference>
<dbReference type="Pfam" id="PF23756">
    <property type="entry name" value="Beta-prop_HPS5"/>
    <property type="match status" value="1"/>
</dbReference>
<dbReference type="Pfam" id="PF23757">
    <property type="entry name" value="TPR_HPS5_insect"/>
    <property type="match status" value="1"/>
</dbReference>
<dbReference type="PIRSF" id="PIRSF037475">
    <property type="entry name" value="BLOC-2_complex_Hps5"/>
    <property type="match status" value="1"/>
</dbReference>
<dbReference type="SUPFAM" id="SSF69322">
    <property type="entry name" value="Tricorn protease domain 2"/>
    <property type="match status" value="1"/>
</dbReference>
<accession>Q9VHN9</accession>
<accession>Q8SXI1</accession>
<evidence type="ECO:0000255" key="1"/>
<evidence type="ECO:0000256" key="2">
    <source>
        <dbReference type="SAM" id="MobiDB-lite"/>
    </source>
</evidence>
<evidence type="ECO:0000269" key="3">
    <source>
    </source>
</evidence>
<evidence type="ECO:0000269" key="4">
    <source>
    </source>
</evidence>
<evidence type="ECO:0000269" key="5">
    <source>
    </source>
</evidence>
<evidence type="ECO:0000269" key="6">
    <source>
    </source>
</evidence>
<evidence type="ECO:0000303" key="7">
    <source>
    </source>
</evidence>
<evidence type="ECO:0000303" key="8">
    <source>
    </source>
</evidence>
<evidence type="ECO:0000305" key="9"/>
<evidence type="ECO:0000312" key="10">
    <source>
        <dbReference type="EMBL" id="AAF54263.1"/>
    </source>
</evidence>
<evidence type="ECO:0000312" key="11">
    <source>
        <dbReference type="EMBL" id="AAL90363.1"/>
    </source>
</evidence>
<gene>
    <name evidence="7 8" type="primary">p</name>
    <name evidence="7" type="synonym">HPS5</name>
    <name type="ORF">CG9770</name>
</gene>
<comment type="function">
    <text evidence="6">Has a role in the biogenesis of eye pigment granules. Eye pigment granules are specialized forms of late endosomes or lysosomes. Biogenesis of pigment granules in the eye requires molecular components required for protein delivery to lysosomes.</text>
</comment>
<comment type="tissue specificity">
    <text evidence="6">Expressed in eye pigment granules.</text>
</comment>
<comment type="developmental stage">
    <text evidence="5">Expressed throughout development, highest expression being in adult heads.</text>
</comment>
<comment type="disruption phenotype">
    <text evidence="5">Flies exhibit defects in vesicular transport to lysosomes and therefore can alter eye color.</text>
</comment>
<comment type="miscellaneous">
    <text>Pink was the second eye color gene identified by Morgan and colleagues, mutant flies were isolated in June 1910 just 2 months after isolation of the first white mutant allele. Another mutant allele of pink, peach, was isolated by Bridges in 1913, and according to a review published by Bridges and Morgan 10 years later, these alleles represented the first case of multiple allelomorphs described for an autosomal gene in Drosophila.</text>
</comment>
<comment type="similarity">
    <text evidence="9">Belongs to the HPS5 family.</text>
</comment>
<sequence>MADAYCLTNFIDFSLSLSLPLKHHNRIKYTCFDISDSYIIFGASSGSLYLFNRNGKFLLLIPNKHGAITSLSISANSKYVAFATQRSLICVYAVNLSAQATPQVIFTHLDQSVQVTCIHWTQDEKQFYYGDSRGQVSLVLLSSFIGHSLLFNMTVHPLLYLDSPIVQIDDFEYLLLVSNCTKCILCNTEYEDYKQIGNRPRDGAFGACFFVSPQESLQPSRIYCARPGSRVWEVDFEGEVIQTHQFKTALATAPARIQRPGSGTDELDANAELLDYQPQNLQFAKVQRLNDDFLLAFTELGLYIFDIRRSAVVLWSNQFERIADCRSSGSEIFVFTQSGALYSVQLQTLQSHAVSLIQQSKLLPCANLLRQHVRYFADKAREDYELKQLNPLKQLLIERQEYELLNDISVIFDAITQCTGSALDTHSSGGSSATTERSLSGGSSSRAPPKGVYVLENAFCDNLKQPLKTGHFKDALLTVTGKFGKNIIKYKFNIFAEEQQQLVRELIPASERSLPFKDIKARYESGSEDQEEEIVRRCKKPAPQVPHISPEEKTLYNLYLIAKSAKFSRTQCVDRYRAVFDEYAAGELVNLLEKLAQVMVEHGDTPDQAQRNCYEMYFDYLDPEMIWEVDDATRDHIAAGFVLLNTSQNAEIVKCEHCSFPLRFDTSCQYHELGAVLLRYFWSRGEQLKCFDVVQSVPALLDVLAKFYLAEQNLTKVVAIVLNYGLPELLADVGKQLSVSAWGRCFEQFVELQRGGRLVCANCECISGVEQEQLGRHFFYNWNCFLNIALDHMSAGDTLALIFKWSSYIPNDAIDREFYSRCLLKG</sequence>
<name>HPS5_DROME</name>
<protein>
    <recommendedName>
        <fullName evidence="9">BLOC-2 complex member HPS5 homolog</fullName>
    </recommendedName>
    <alternativeName>
        <fullName>Hermansky-Pudlak syndrome 5 protein homolog</fullName>
    </alternativeName>
    <alternativeName>
        <fullName>Protein pink</fullName>
    </alternativeName>
    <alternativeName>
        <fullName>dHPS5</fullName>
    </alternativeName>
</protein>